<sequence length="311" mass="34240">MSNSIVIQTNSTVIEDMKQQYKHSLSPKTPQGGIFMAKVPSCTITAYKSGKVMFQGGRAEAEASRWQTVSQTPKTAVKKSVDSHRYAPPASIGTMSIVGSDEVGTGDFFGPMTVVAVYVDAKQIPLLKELGVKDSKNLNDDQITAIAKQLLHVVPYSSLVLHNEKYNELFDKGNNQGKLKALLHNKAITNLLAKMAPTKPEGVLIDQFTQPDTYYKYLAKQKQVQRENVYFATKGESVHLAVAAASILARYSFVKQFDELSKKAGMPLPKGAGKQVDIAAAKLIQKLGKERLPEFVKLHFANTEKALRLLR</sequence>
<protein>
    <recommendedName>
        <fullName evidence="1">Ribonuclease HIII</fullName>
        <shortName evidence="1">RNase HIII</shortName>
        <ecNumber evidence="1">3.1.26.4</ecNumber>
    </recommendedName>
</protein>
<evidence type="ECO:0000255" key="1">
    <source>
        <dbReference type="HAMAP-Rule" id="MF_00053"/>
    </source>
</evidence>
<evidence type="ECO:0000255" key="2">
    <source>
        <dbReference type="PROSITE-ProRule" id="PRU01319"/>
    </source>
</evidence>
<reference key="1">
    <citation type="journal article" date="2003" name="Nature">
        <title>Genome sequence of Bacillus cereus and comparative analysis with Bacillus anthracis.</title>
        <authorList>
            <person name="Ivanova N."/>
            <person name="Sorokin A."/>
            <person name="Anderson I."/>
            <person name="Galleron N."/>
            <person name="Candelon B."/>
            <person name="Kapatral V."/>
            <person name="Bhattacharyya A."/>
            <person name="Reznik G."/>
            <person name="Mikhailova N."/>
            <person name="Lapidus A."/>
            <person name="Chu L."/>
            <person name="Mazur M."/>
            <person name="Goltsman E."/>
            <person name="Larsen N."/>
            <person name="D'Souza M."/>
            <person name="Walunas T."/>
            <person name="Grechkin Y."/>
            <person name="Pusch G."/>
            <person name="Haselkorn R."/>
            <person name="Fonstein M."/>
            <person name="Ehrlich S.D."/>
            <person name="Overbeek R."/>
            <person name="Kyrpides N.C."/>
        </authorList>
    </citation>
    <scope>NUCLEOTIDE SEQUENCE [LARGE SCALE GENOMIC DNA]</scope>
    <source>
        <strain>ATCC 14579 / DSM 31 / CCUG 7414 / JCM 2152 / NBRC 15305 / NCIMB 9373 / NCTC 2599 / NRRL B-3711</strain>
    </source>
</reference>
<comment type="function">
    <text evidence="1">Endonuclease that specifically degrades the RNA of RNA-DNA hybrids.</text>
</comment>
<comment type="catalytic activity">
    <reaction evidence="1">
        <text>Endonucleolytic cleavage to 5'-phosphomonoester.</text>
        <dbReference type="EC" id="3.1.26.4"/>
    </reaction>
</comment>
<comment type="cofactor">
    <cofactor evidence="1">
        <name>Mn(2+)</name>
        <dbReference type="ChEBI" id="CHEBI:29035"/>
    </cofactor>
    <cofactor evidence="1">
        <name>Mg(2+)</name>
        <dbReference type="ChEBI" id="CHEBI:18420"/>
    </cofactor>
    <text evidence="1">Manganese or magnesium. Binds 1 divalent metal ion per monomer in the absence of substrate. May bind a second metal ion after substrate binding.</text>
</comment>
<comment type="subcellular location">
    <subcellularLocation>
        <location evidence="1">Cytoplasm</location>
    </subcellularLocation>
</comment>
<comment type="similarity">
    <text evidence="1">Belongs to the RNase HII family. RnhC subfamily.</text>
</comment>
<name>RNH3_BACCR</name>
<accession>Q817J0</accession>
<feature type="chain" id="PRO_0000111677" description="Ribonuclease HIII">
    <location>
        <begin position="1"/>
        <end position="311"/>
    </location>
</feature>
<feature type="domain" description="RNase H type-2" evidence="2">
    <location>
        <begin position="95"/>
        <end position="311"/>
    </location>
</feature>
<feature type="binding site" evidence="1">
    <location>
        <position position="101"/>
    </location>
    <ligand>
        <name>a divalent metal cation</name>
        <dbReference type="ChEBI" id="CHEBI:60240"/>
    </ligand>
</feature>
<feature type="binding site" evidence="1">
    <location>
        <position position="102"/>
    </location>
    <ligand>
        <name>a divalent metal cation</name>
        <dbReference type="ChEBI" id="CHEBI:60240"/>
    </ligand>
</feature>
<feature type="binding site" evidence="1">
    <location>
        <position position="206"/>
    </location>
    <ligand>
        <name>a divalent metal cation</name>
        <dbReference type="ChEBI" id="CHEBI:60240"/>
    </ligand>
</feature>
<organism>
    <name type="scientific">Bacillus cereus (strain ATCC 14579 / DSM 31 / CCUG 7414 / JCM 2152 / NBRC 15305 / NCIMB 9373 / NCTC 2599 / NRRL B-3711)</name>
    <dbReference type="NCBI Taxonomy" id="226900"/>
    <lineage>
        <taxon>Bacteria</taxon>
        <taxon>Bacillati</taxon>
        <taxon>Bacillota</taxon>
        <taxon>Bacilli</taxon>
        <taxon>Bacillales</taxon>
        <taxon>Bacillaceae</taxon>
        <taxon>Bacillus</taxon>
        <taxon>Bacillus cereus group</taxon>
    </lineage>
</organism>
<gene>
    <name evidence="1" type="primary">rnhC</name>
    <name type="ordered locus">BC_4556</name>
</gene>
<dbReference type="EC" id="3.1.26.4" evidence="1"/>
<dbReference type="EMBL" id="AE016877">
    <property type="protein sequence ID" value="AAP11463.1"/>
    <property type="molecule type" value="Genomic_DNA"/>
</dbReference>
<dbReference type="RefSeq" id="NP_834262.1">
    <property type="nucleotide sequence ID" value="NC_004722.1"/>
</dbReference>
<dbReference type="RefSeq" id="WP_000071591.1">
    <property type="nucleotide sequence ID" value="NC_004722.1"/>
</dbReference>
<dbReference type="SMR" id="Q817J0"/>
<dbReference type="STRING" id="226900.BC_4556"/>
<dbReference type="KEGG" id="bce:BC4556"/>
<dbReference type="PATRIC" id="fig|226900.8.peg.4716"/>
<dbReference type="HOGENOM" id="CLU_059546_1_0_9"/>
<dbReference type="OrthoDB" id="9777935at2"/>
<dbReference type="Proteomes" id="UP000001417">
    <property type="component" value="Chromosome"/>
</dbReference>
<dbReference type="GO" id="GO:0005737">
    <property type="term" value="C:cytoplasm"/>
    <property type="evidence" value="ECO:0007669"/>
    <property type="project" value="UniProtKB-SubCell"/>
</dbReference>
<dbReference type="GO" id="GO:0032299">
    <property type="term" value="C:ribonuclease H2 complex"/>
    <property type="evidence" value="ECO:0000318"/>
    <property type="project" value="GO_Central"/>
</dbReference>
<dbReference type="GO" id="GO:0000287">
    <property type="term" value="F:magnesium ion binding"/>
    <property type="evidence" value="ECO:0007669"/>
    <property type="project" value="UniProtKB-UniRule"/>
</dbReference>
<dbReference type="GO" id="GO:0003723">
    <property type="term" value="F:RNA binding"/>
    <property type="evidence" value="ECO:0007669"/>
    <property type="project" value="InterPro"/>
</dbReference>
<dbReference type="GO" id="GO:0004523">
    <property type="term" value="F:RNA-DNA hybrid ribonuclease activity"/>
    <property type="evidence" value="ECO:0000318"/>
    <property type="project" value="GO_Central"/>
</dbReference>
<dbReference type="GO" id="GO:0043137">
    <property type="term" value="P:DNA replication, removal of RNA primer"/>
    <property type="evidence" value="ECO:0000318"/>
    <property type="project" value="GO_Central"/>
</dbReference>
<dbReference type="GO" id="GO:0006298">
    <property type="term" value="P:mismatch repair"/>
    <property type="evidence" value="ECO:0000318"/>
    <property type="project" value="GO_Central"/>
</dbReference>
<dbReference type="CDD" id="cd06590">
    <property type="entry name" value="RNase_HII_bacteria_HIII_like"/>
    <property type="match status" value="1"/>
</dbReference>
<dbReference type="CDD" id="cd14796">
    <property type="entry name" value="RNAse_HIII_N"/>
    <property type="match status" value="1"/>
</dbReference>
<dbReference type="FunFam" id="3.30.310.10:FF:000016">
    <property type="entry name" value="Ribonuclease HIII"/>
    <property type="match status" value="1"/>
</dbReference>
<dbReference type="FunFam" id="3.30.420.10:FF:000047">
    <property type="entry name" value="Ribonuclease HIII"/>
    <property type="match status" value="1"/>
</dbReference>
<dbReference type="Gene3D" id="3.30.420.10">
    <property type="entry name" value="Ribonuclease H-like superfamily/Ribonuclease H"/>
    <property type="match status" value="1"/>
</dbReference>
<dbReference type="Gene3D" id="3.30.310.10">
    <property type="entry name" value="TATA-Binding Protein"/>
    <property type="match status" value="1"/>
</dbReference>
<dbReference type="HAMAP" id="MF_00053">
    <property type="entry name" value="RNase_HIII"/>
    <property type="match status" value="1"/>
</dbReference>
<dbReference type="InterPro" id="IPR001352">
    <property type="entry name" value="RNase_HII/HIII"/>
</dbReference>
<dbReference type="InterPro" id="IPR024567">
    <property type="entry name" value="RNase_HII/HIII_dom"/>
</dbReference>
<dbReference type="InterPro" id="IPR004641">
    <property type="entry name" value="RNase_HIII"/>
</dbReference>
<dbReference type="InterPro" id="IPR024568">
    <property type="entry name" value="RNase_HIII_N"/>
</dbReference>
<dbReference type="InterPro" id="IPR012337">
    <property type="entry name" value="RNaseH-like_sf"/>
</dbReference>
<dbReference type="InterPro" id="IPR036397">
    <property type="entry name" value="RNaseH_sf"/>
</dbReference>
<dbReference type="InterPro" id="IPR012295">
    <property type="entry name" value="TBP_dom_sf"/>
</dbReference>
<dbReference type="NCBIfam" id="TIGR00716">
    <property type="entry name" value="rnhC"/>
    <property type="match status" value="1"/>
</dbReference>
<dbReference type="PANTHER" id="PTHR10954:SF23">
    <property type="entry name" value="RIBONUCLEASE"/>
    <property type="match status" value="1"/>
</dbReference>
<dbReference type="PANTHER" id="PTHR10954">
    <property type="entry name" value="RIBONUCLEASE H2 SUBUNIT A"/>
    <property type="match status" value="1"/>
</dbReference>
<dbReference type="Pfam" id="PF11858">
    <property type="entry name" value="DUF3378"/>
    <property type="match status" value="1"/>
</dbReference>
<dbReference type="Pfam" id="PF01351">
    <property type="entry name" value="RNase_HII"/>
    <property type="match status" value="1"/>
</dbReference>
<dbReference type="PIRSF" id="PIRSF037748">
    <property type="entry name" value="RnhC"/>
    <property type="match status" value="1"/>
</dbReference>
<dbReference type="SUPFAM" id="SSF53098">
    <property type="entry name" value="Ribonuclease H-like"/>
    <property type="match status" value="1"/>
</dbReference>
<dbReference type="PROSITE" id="PS51975">
    <property type="entry name" value="RNASE_H_2"/>
    <property type="match status" value="1"/>
</dbReference>
<proteinExistence type="inferred from homology"/>
<keyword id="KW-0963">Cytoplasm</keyword>
<keyword id="KW-0255">Endonuclease</keyword>
<keyword id="KW-0378">Hydrolase</keyword>
<keyword id="KW-0460">Magnesium</keyword>
<keyword id="KW-0479">Metal-binding</keyword>
<keyword id="KW-0540">Nuclease</keyword>
<keyword id="KW-1185">Reference proteome</keyword>